<name>EFTU_NEIMB</name>
<sequence length="394" mass="42909">MAKEKFERSKPHVNVGTIGHVDHGKTTLTAALTTILAKKFGGAAKAYDQIDNAPEEKARGITINTSHVEYETETRHYAHVDCPGHADYVKNMITGAAQMDGAILVCSAADGPMPQTREHILLARQVGVPYIIVFMNKCDMVDDAELLELVEMEIRDLLSSYDFPGDDCPIVQGSALKALEGDAAYEEKIFELAAALDSYIPTPERAVDKPFLLPIEDVFSISGRGTVVTGRVERGIIHVGDEIEIVGLKETQKTTCTGVEMFRKLLDEGQAGDNVGVLLRGTKREDVERGQVLAKPGTITPHTKFKAEVYVLSKEEGGRHTPFFANYRPQFYFRTTDVTGAVTLEEGVEMVMPGENVTITVELIAPIAMEEGLRFAIREGGRTVGAGVVSSVIA</sequence>
<evidence type="ECO:0000250" key="1"/>
<evidence type="ECO:0000255" key="2">
    <source>
        <dbReference type="HAMAP-Rule" id="MF_00118"/>
    </source>
</evidence>
<protein>
    <recommendedName>
        <fullName evidence="2">Elongation factor Tu</fullName>
        <shortName evidence="2">EF-Tu</shortName>
        <ecNumber evidence="2">3.6.5.3</ecNumber>
    </recommendedName>
</protein>
<comment type="function">
    <text evidence="2">GTP hydrolase that promotes the GTP-dependent binding of aminoacyl-tRNA to the A-site of ribosomes during protein biosynthesis.</text>
</comment>
<comment type="catalytic activity">
    <reaction evidence="2">
        <text>GTP + H2O = GDP + phosphate + H(+)</text>
        <dbReference type="Rhea" id="RHEA:19669"/>
        <dbReference type="ChEBI" id="CHEBI:15377"/>
        <dbReference type="ChEBI" id="CHEBI:15378"/>
        <dbReference type="ChEBI" id="CHEBI:37565"/>
        <dbReference type="ChEBI" id="CHEBI:43474"/>
        <dbReference type="ChEBI" id="CHEBI:58189"/>
        <dbReference type="EC" id="3.6.5.3"/>
    </reaction>
    <physiologicalReaction direction="left-to-right" evidence="2">
        <dbReference type="Rhea" id="RHEA:19670"/>
    </physiologicalReaction>
</comment>
<comment type="subunit">
    <text evidence="2">Monomer.</text>
</comment>
<comment type="subcellular location">
    <subcellularLocation>
        <location evidence="2">Cytoplasm</location>
    </subcellularLocation>
</comment>
<comment type="miscellaneous">
    <text>Present in outer membrane vesicle formulations which are used as vaccines in human.</text>
</comment>
<comment type="similarity">
    <text evidence="2">Belongs to the TRAFAC class translation factor GTPase superfamily. Classic translation factor GTPase family. EF-Tu/EF-1A subfamily.</text>
</comment>
<dbReference type="EC" id="3.6.5.3" evidence="2"/>
<dbReference type="EMBL" id="AE002098">
    <property type="protein sequence ID" value="AAF40583.1"/>
    <property type="molecule type" value="Genomic_DNA"/>
</dbReference>
<dbReference type="EMBL" id="AE002098">
    <property type="protein sequence ID" value="AAF40598.1"/>
    <property type="molecule type" value="Genomic_DNA"/>
</dbReference>
<dbReference type="PIR" id="A81235">
    <property type="entry name" value="A81235"/>
</dbReference>
<dbReference type="PIR" id="D81234">
    <property type="entry name" value="D81234"/>
</dbReference>
<dbReference type="RefSeq" id="NP_273182.1">
    <property type="nucleotide sequence ID" value="NC_003112.2"/>
</dbReference>
<dbReference type="RefSeq" id="NP_273197.1">
    <property type="nucleotide sequence ID" value="NC_003112.2"/>
</dbReference>
<dbReference type="SMR" id="P64027"/>
<dbReference type="FunCoup" id="P64027">
    <property type="interactions" value="566"/>
</dbReference>
<dbReference type="STRING" id="122586.NMB0124"/>
<dbReference type="PaxDb" id="122586-NMB0124"/>
<dbReference type="KEGG" id="nme:NMB0124"/>
<dbReference type="KEGG" id="nme:NMB0139"/>
<dbReference type="PATRIC" id="fig|122586.8.peg.164"/>
<dbReference type="HOGENOM" id="CLU_007265_0_1_4"/>
<dbReference type="InParanoid" id="P64027"/>
<dbReference type="OrthoDB" id="9803139at2"/>
<dbReference type="Proteomes" id="UP000000425">
    <property type="component" value="Chromosome"/>
</dbReference>
<dbReference type="GO" id="GO:0005737">
    <property type="term" value="C:cytoplasm"/>
    <property type="evidence" value="ECO:0007669"/>
    <property type="project" value="UniProtKB-SubCell"/>
</dbReference>
<dbReference type="GO" id="GO:0005525">
    <property type="term" value="F:GTP binding"/>
    <property type="evidence" value="ECO:0007669"/>
    <property type="project" value="UniProtKB-UniRule"/>
</dbReference>
<dbReference type="GO" id="GO:0003924">
    <property type="term" value="F:GTPase activity"/>
    <property type="evidence" value="ECO:0007669"/>
    <property type="project" value="InterPro"/>
</dbReference>
<dbReference type="GO" id="GO:0097216">
    <property type="term" value="F:guanosine tetraphosphate binding"/>
    <property type="evidence" value="ECO:0007669"/>
    <property type="project" value="UniProtKB-ARBA"/>
</dbReference>
<dbReference type="GO" id="GO:0003746">
    <property type="term" value="F:translation elongation factor activity"/>
    <property type="evidence" value="ECO:0000318"/>
    <property type="project" value="GO_Central"/>
</dbReference>
<dbReference type="GO" id="GO:0006414">
    <property type="term" value="P:translational elongation"/>
    <property type="evidence" value="ECO:0000318"/>
    <property type="project" value="GO_Central"/>
</dbReference>
<dbReference type="CDD" id="cd01884">
    <property type="entry name" value="EF_Tu"/>
    <property type="match status" value="1"/>
</dbReference>
<dbReference type="CDD" id="cd03697">
    <property type="entry name" value="EFTU_II"/>
    <property type="match status" value="1"/>
</dbReference>
<dbReference type="CDD" id="cd03707">
    <property type="entry name" value="EFTU_III"/>
    <property type="match status" value="1"/>
</dbReference>
<dbReference type="FunFam" id="2.40.30.10:FF:000001">
    <property type="entry name" value="Elongation factor Tu"/>
    <property type="match status" value="1"/>
</dbReference>
<dbReference type="FunFam" id="3.40.50.300:FF:000003">
    <property type="entry name" value="Elongation factor Tu"/>
    <property type="match status" value="1"/>
</dbReference>
<dbReference type="Gene3D" id="3.40.50.300">
    <property type="entry name" value="P-loop containing nucleotide triphosphate hydrolases"/>
    <property type="match status" value="1"/>
</dbReference>
<dbReference type="Gene3D" id="2.40.30.10">
    <property type="entry name" value="Translation factors"/>
    <property type="match status" value="2"/>
</dbReference>
<dbReference type="HAMAP" id="MF_00118_B">
    <property type="entry name" value="EF_Tu_B"/>
    <property type="match status" value="1"/>
</dbReference>
<dbReference type="InterPro" id="IPR041709">
    <property type="entry name" value="EF-Tu_GTP-bd"/>
</dbReference>
<dbReference type="InterPro" id="IPR050055">
    <property type="entry name" value="EF-Tu_GTPase"/>
</dbReference>
<dbReference type="InterPro" id="IPR004161">
    <property type="entry name" value="EFTu-like_2"/>
</dbReference>
<dbReference type="InterPro" id="IPR033720">
    <property type="entry name" value="EFTU_2"/>
</dbReference>
<dbReference type="InterPro" id="IPR031157">
    <property type="entry name" value="G_TR_CS"/>
</dbReference>
<dbReference type="InterPro" id="IPR027417">
    <property type="entry name" value="P-loop_NTPase"/>
</dbReference>
<dbReference type="InterPro" id="IPR005225">
    <property type="entry name" value="Small_GTP-bd"/>
</dbReference>
<dbReference type="InterPro" id="IPR000795">
    <property type="entry name" value="T_Tr_GTP-bd_dom"/>
</dbReference>
<dbReference type="InterPro" id="IPR009000">
    <property type="entry name" value="Transl_B-barrel_sf"/>
</dbReference>
<dbReference type="InterPro" id="IPR009001">
    <property type="entry name" value="Transl_elong_EF1A/Init_IF2_C"/>
</dbReference>
<dbReference type="InterPro" id="IPR004541">
    <property type="entry name" value="Transl_elong_EFTu/EF1A_bac/org"/>
</dbReference>
<dbReference type="InterPro" id="IPR004160">
    <property type="entry name" value="Transl_elong_EFTu/EF1A_C"/>
</dbReference>
<dbReference type="NCBIfam" id="TIGR00485">
    <property type="entry name" value="EF-Tu"/>
    <property type="match status" value="1"/>
</dbReference>
<dbReference type="NCBIfam" id="NF000766">
    <property type="entry name" value="PRK00049.1"/>
    <property type="match status" value="1"/>
</dbReference>
<dbReference type="NCBIfam" id="NF009372">
    <property type="entry name" value="PRK12735.1"/>
    <property type="match status" value="1"/>
</dbReference>
<dbReference type="NCBIfam" id="NF009373">
    <property type="entry name" value="PRK12736.1"/>
    <property type="match status" value="1"/>
</dbReference>
<dbReference type="NCBIfam" id="TIGR00231">
    <property type="entry name" value="small_GTP"/>
    <property type="match status" value="1"/>
</dbReference>
<dbReference type="PANTHER" id="PTHR43721:SF22">
    <property type="entry name" value="ELONGATION FACTOR TU, MITOCHONDRIAL"/>
    <property type="match status" value="1"/>
</dbReference>
<dbReference type="PANTHER" id="PTHR43721">
    <property type="entry name" value="ELONGATION FACTOR TU-RELATED"/>
    <property type="match status" value="1"/>
</dbReference>
<dbReference type="Pfam" id="PF00009">
    <property type="entry name" value="GTP_EFTU"/>
    <property type="match status" value="1"/>
</dbReference>
<dbReference type="Pfam" id="PF03144">
    <property type="entry name" value="GTP_EFTU_D2"/>
    <property type="match status" value="1"/>
</dbReference>
<dbReference type="Pfam" id="PF03143">
    <property type="entry name" value="GTP_EFTU_D3"/>
    <property type="match status" value="1"/>
</dbReference>
<dbReference type="PRINTS" id="PR00315">
    <property type="entry name" value="ELONGATNFCT"/>
</dbReference>
<dbReference type="SUPFAM" id="SSF50465">
    <property type="entry name" value="EF-Tu/eEF-1alpha/eIF2-gamma C-terminal domain"/>
    <property type="match status" value="1"/>
</dbReference>
<dbReference type="SUPFAM" id="SSF52540">
    <property type="entry name" value="P-loop containing nucleoside triphosphate hydrolases"/>
    <property type="match status" value="1"/>
</dbReference>
<dbReference type="SUPFAM" id="SSF50447">
    <property type="entry name" value="Translation proteins"/>
    <property type="match status" value="1"/>
</dbReference>
<dbReference type="PROSITE" id="PS00301">
    <property type="entry name" value="G_TR_1"/>
    <property type="match status" value="1"/>
</dbReference>
<dbReference type="PROSITE" id="PS51722">
    <property type="entry name" value="G_TR_2"/>
    <property type="match status" value="1"/>
</dbReference>
<reference key="1">
    <citation type="journal article" date="2000" name="Science">
        <title>Complete genome sequence of Neisseria meningitidis serogroup B strain MC58.</title>
        <authorList>
            <person name="Tettelin H."/>
            <person name="Saunders N.J."/>
            <person name="Heidelberg J.F."/>
            <person name="Jeffries A.C."/>
            <person name="Nelson K.E."/>
            <person name="Eisen J.A."/>
            <person name="Ketchum K.A."/>
            <person name="Hood D.W."/>
            <person name="Peden J.F."/>
            <person name="Dodson R.J."/>
            <person name="Nelson W.C."/>
            <person name="Gwinn M.L."/>
            <person name="DeBoy R.T."/>
            <person name="Peterson J.D."/>
            <person name="Hickey E.K."/>
            <person name="Haft D.H."/>
            <person name="Salzberg S.L."/>
            <person name="White O."/>
            <person name="Fleischmann R.D."/>
            <person name="Dougherty B.A."/>
            <person name="Mason T.M."/>
            <person name="Ciecko A."/>
            <person name="Parksey D.S."/>
            <person name="Blair E."/>
            <person name="Cittone H."/>
            <person name="Clark E.B."/>
            <person name="Cotton M.D."/>
            <person name="Utterback T.R."/>
            <person name="Khouri H.M."/>
            <person name="Qin H."/>
            <person name="Vamathevan J.J."/>
            <person name="Gill J."/>
            <person name="Scarlato V."/>
            <person name="Masignani V."/>
            <person name="Pizza M."/>
            <person name="Grandi G."/>
            <person name="Sun L."/>
            <person name="Smith H.O."/>
            <person name="Fraser C.M."/>
            <person name="Moxon E.R."/>
            <person name="Rappuoli R."/>
            <person name="Venter J.C."/>
        </authorList>
    </citation>
    <scope>NUCLEOTIDE SEQUENCE [LARGE SCALE GENOMIC DNA]</scope>
    <source>
        <strain>ATCC BAA-335 / MC58</strain>
    </source>
</reference>
<reference key="2">
    <citation type="journal article" date="2005" name="Hum. Vaccin.">
        <title>Characterization of the protein content of a meningococcal outer membrane vesicle vaccine by polyacrylamide gel electrophoresis and mass spectrometry.</title>
        <authorList>
            <person name="Vipond C."/>
            <person name="Wheeler J.X."/>
            <person name="Jones C."/>
            <person name="Feavers I.M."/>
            <person name="Suker J."/>
        </authorList>
    </citation>
    <scope>IDENTIFICATION BY MASS SPECTROMETRY [LARGE SCALE ANALYSIS]</scope>
</reference>
<reference key="3">
    <citation type="journal article" date="2006" name="Proteomics">
        <title>Proteomic analysis of a meningococcal outer membrane vesicle vaccine prepared from the group B strain NZ98/254.</title>
        <authorList>
            <person name="Vipond C."/>
            <person name="Suker J."/>
            <person name="Jones C."/>
            <person name="Tang C."/>
            <person name="Feavers I.M."/>
            <person name="Wheeler J.X."/>
        </authorList>
    </citation>
    <scope>IDENTIFICATION BY MASS SPECTROMETRY [LARGE SCALE ANALYSIS]</scope>
    <source>
        <strain>NZ98/254 / Serogroup B</strain>
    </source>
</reference>
<organism>
    <name type="scientific">Neisseria meningitidis serogroup B (strain ATCC BAA-335 / MC58)</name>
    <dbReference type="NCBI Taxonomy" id="122586"/>
    <lineage>
        <taxon>Bacteria</taxon>
        <taxon>Pseudomonadati</taxon>
        <taxon>Pseudomonadota</taxon>
        <taxon>Betaproteobacteria</taxon>
        <taxon>Neisseriales</taxon>
        <taxon>Neisseriaceae</taxon>
        <taxon>Neisseria</taxon>
    </lineage>
</organism>
<gene>
    <name evidence="2" type="primary">tufA</name>
    <name type="synonym">tufA1</name>
    <name type="ordered locus">NMB0124</name>
</gene>
<gene>
    <name evidence="2" type="primary">tufB</name>
    <name type="synonym">tufA2</name>
    <name type="ordered locus">NMB0139</name>
</gene>
<accession>P64027</accession>
<accession>Q9JRI5</accession>
<accession>Q9K1I7</accession>
<feature type="chain" id="PRO_0000091357" description="Elongation factor Tu">
    <location>
        <begin position="1"/>
        <end position="394"/>
    </location>
</feature>
<feature type="domain" description="tr-type G">
    <location>
        <begin position="10"/>
        <end position="204"/>
    </location>
</feature>
<feature type="region of interest" description="G1" evidence="1">
    <location>
        <begin position="19"/>
        <end position="26"/>
    </location>
</feature>
<feature type="region of interest" description="G2" evidence="1">
    <location>
        <begin position="60"/>
        <end position="64"/>
    </location>
</feature>
<feature type="region of interest" description="G3" evidence="1">
    <location>
        <begin position="81"/>
        <end position="84"/>
    </location>
</feature>
<feature type="region of interest" description="G4" evidence="1">
    <location>
        <begin position="136"/>
        <end position="139"/>
    </location>
</feature>
<feature type="region of interest" description="G5" evidence="1">
    <location>
        <begin position="174"/>
        <end position="176"/>
    </location>
</feature>
<feature type="binding site" evidence="2">
    <location>
        <begin position="19"/>
        <end position="26"/>
    </location>
    <ligand>
        <name>GTP</name>
        <dbReference type="ChEBI" id="CHEBI:37565"/>
    </ligand>
</feature>
<feature type="binding site" evidence="2">
    <location>
        <position position="26"/>
    </location>
    <ligand>
        <name>Mg(2+)</name>
        <dbReference type="ChEBI" id="CHEBI:18420"/>
    </ligand>
</feature>
<feature type="binding site" evidence="2">
    <location>
        <begin position="81"/>
        <end position="85"/>
    </location>
    <ligand>
        <name>GTP</name>
        <dbReference type="ChEBI" id="CHEBI:37565"/>
    </ligand>
</feature>
<feature type="binding site" evidence="2">
    <location>
        <begin position="136"/>
        <end position="139"/>
    </location>
    <ligand>
        <name>GTP</name>
        <dbReference type="ChEBI" id="CHEBI:37565"/>
    </ligand>
</feature>
<feature type="sequence variant" description="In TufB.">
    <original>A</original>
    <variation>S</variation>
    <location>
        <position position="37"/>
    </location>
</feature>
<keyword id="KW-0963">Cytoplasm</keyword>
<keyword id="KW-0251">Elongation factor</keyword>
<keyword id="KW-0342">GTP-binding</keyword>
<keyword id="KW-0378">Hydrolase</keyword>
<keyword id="KW-0460">Magnesium</keyword>
<keyword id="KW-0479">Metal-binding</keyword>
<keyword id="KW-0547">Nucleotide-binding</keyword>
<keyword id="KW-0648">Protein biosynthesis</keyword>
<keyword id="KW-1185">Reference proteome</keyword>
<proteinExistence type="evidence at protein level"/>